<sequence>MTHYHFVGIKGSGMSSLAQIMHDLGHEVQGSDIESYVFTEVALRNKGIKILPFDANNITKEMVVIQGNAFPDNHEEIVRAHELKLDIIKYHDFLGHVINQYTSVAVTGAHGKTSTTGLLSHVMNGDKKTSFLIGDGTGMGLPGSDYFAFEACEYRRHFLSYHPDYAIMTNIDFDHPDYFKNIDDVYDAFQHMALNVKKGIIAWGDDEYLRKLDVDIPVYYYGFKETDDIYAKNIQITEKGTQFDVYIKGEFYDQFLSPQYGNHNILNALAVIAISYLEDMNVENIKEALITFGGVKRRFNETKVSNQVIVDDYAHHPREISATIETARKKYPQKDVVAVFQPHTFSRTQAFLNEFAESLSKADQVFLCEIFGSIRENTGDLTIEDLINRIDGSTLIDENSIDVLEKFDNAVILFMGAGDIQKLLKAYFEKLGVKNDF</sequence>
<feature type="chain" id="PRO_0000182159" description="UDP-N-acetylmuramate--L-alanine ligase">
    <location>
        <begin position="1"/>
        <end position="437"/>
    </location>
</feature>
<feature type="binding site" evidence="1">
    <location>
        <begin position="108"/>
        <end position="114"/>
    </location>
    <ligand>
        <name>ATP</name>
        <dbReference type="ChEBI" id="CHEBI:30616"/>
    </ligand>
</feature>
<accession>Q8CS47</accession>
<comment type="function">
    <text evidence="1">Cell wall formation.</text>
</comment>
<comment type="catalytic activity">
    <reaction evidence="1">
        <text>UDP-N-acetyl-alpha-D-muramate + L-alanine + ATP = UDP-N-acetyl-alpha-D-muramoyl-L-alanine + ADP + phosphate + H(+)</text>
        <dbReference type="Rhea" id="RHEA:23372"/>
        <dbReference type="ChEBI" id="CHEBI:15378"/>
        <dbReference type="ChEBI" id="CHEBI:30616"/>
        <dbReference type="ChEBI" id="CHEBI:43474"/>
        <dbReference type="ChEBI" id="CHEBI:57972"/>
        <dbReference type="ChEBI" id="CHEBI:70757"/>
        <dbReference type="ChEBI" id="CHEBI:83898"/>
        <dbReference type="ChEBI" id="CHEBI:456216"/>
        <dbReference type="EC" id="6.3.2.8"/>
    </reaction>
</comment>
<comment type="pathway">
    <text evidence="1">Cell wall biogenesis; peptidoglycan biosynthesis.</text>
</comment>
<comment type="subcellular location">
    <subcellularLocation>
        <location evidence="1">Cytoplasm</location>
    </subcellularLocation>
</comment>
<comment type="similarity">
    <text evidence="1">Belongs to the MurCDEF family.</text>
</comment>
<organism>
    <name type="scientific">Staphylococcus epidermidis (strain ATCC 12228 / FDA PCI 1200)</name>
    <dbReference type="NCBI Taxonomy" id="176280"/>
    <lineage>
        <taxon>Bacteria</taxon>
        <taxon>Bacillati</taxon>
        <taxon>Bacillota</taxon>
        <taxon>Bacilli</taxon>
        <taxon>Bacillales</taxon>
        <taxon>Staphylococcaceae</taxon>
        <taxon>Staphylococcus</taxon>
    </lineage>
</organism>
<name>MURC_STAES</name>
<dbReference type="EC" id="6.3.2.8" evidence="1"/>
<dbReference type="EMBL" id="AE015929">
    <property type="protein sequence ID" value="AAO05012.1"/>
    <property type="molecule type" value="Genomic_DNA"/>
</dbReference>
<dbReference type="RefSeq" id="NP_764968.1">
    <property type="nucleotide sequence ID" value="NC_004461.1"/>
</dbReference>
<dbReference type="RefSeq" id="WP_002484970.1">
    <property type="nucleotide sequence ID" value="NZ_WBME01000009.1"/>
</dbReference>
<dbReference type="SMR" id="Q8CS47"/>
<dbReference type="GeneID" id="50018476"/>
<dbReference type="KEGG" id="sep:SE_1413"/>
<dbReference type="PATRIC" id="fig|176280.10.peg.1380"/>
<dbReference type="eggNOG" id="COG0773">
    <property type="taxonomic scope" value="Bacteria"/>
</dbReference>
<dbReference type="HOGENOM" id="CLU_028104_1_0_9"/>
<dbReference type="OrthoDB" id="9804126at2"/>
<dbReference type="UniPathway" id="UPA00219"/>
<dbReference type="Proteomes" id="UP000001411">
    <property type="component" value="Chromosome"/>
</dbReference>
<dbReference type="GO" id="GO:0005737">
    <property type="term" value="C:cytoplasm"/>
    <property type="evidence" value="ECO:0007669"/>
    <property type="project" value="UniProtKB-SubCell"/>
</dbReference>
<dbReference type="GO" id="GO:0005524">
    <property type="term" value="F:ATP binding"/>
    <property type="evidence" value="ECO:0007669"/>
    <property type="project" value="UniProtKB-UniRule"/>
</dbReference>
<dbReference type="GO" id="GO:0008763">
    <property type="term" value="F:UDP-N-acetylmuramate-L-alanine ligase activity"/>
    <property type="evidence" value="ECO:0007669"/>
    <property type="project" value="UniProtKB-UniRule"/>
</dbReference>
<dbReference type="GO" id="GO:0051301">
    <property type="term" value="P:cell division"/>
    <property type="evidence" value="ECO:0007669"/>
    <property type="project" value="UniProtKB-KW"/>
</dbReference>
<dbReference type="GO" id="GO:0071555">
    <property type="term" value="P:cell wall organization"/>
    <property type="evidence" value="ECO:0007669"/>
    <property type="project" value="UniProtKB-KW"/>
</dbReference>
<dbReference type="GO" id="GO:0009252">
    <property type="term" value="P:peptidoglycan biosynthetic process"/>
    <property type="evidence" value="ECO:0007669"/>
    <property type="project" value="UniProtKB-UniRule"/>
</dbReference>
<dbReference type="GO" id="GO:0008360">
    <property type="term" value="P:regulation of cell shape"/>
    <property type="evidence" value="ECO:0007669"/>
    <property type="project" value="UniProtKB-KW"/>
</dbReference>
<dbReference type="Gene3D" id="3.90.190.20">
    <property type="entry name" value="Mur ligase, C-terminal domain"/>
    <property type="match status" value="1"/>
</dbReference>
<dbReference type="Gene3D" id="3.40.1190.10">
    <property type="entry name" value="Mur-like, catalytic domain"/>
    <property type="match status" value="1"/>
</dbReference>
<dbReference type="Gene3D" id="3.40.50.720">
    <property type="entry name" value="NAD(P)-binding Rossmann-like Domain"/>
    <property type="match status" value="1"/>
</dbReference>
<dbReference type="HAMAP" id="MF_00046">
    <property type="entry name" value="MurC"/>
    <property type="match status" value="1"/>
</dbReference>
<dbReference type="InterPro" id="IPR036565">
    <property type="entry name" value="Mur-like_cat_sf"/>
</dbReference>
<dbReference type="InterPro" id="IPR004101">
    <property type="entry name" value="Mur_ligase_C"/>
</dbReference>
<dbReference type="InterPro" id="IPR036615">
    <property type="entry name" value="Mur_ligase_C_dom_sf"/>
</dbReference>
<dbReference type="InterPro" id="IPR013221">
    <property type="entry name" value="Mur_ligase_cen"/>
</dbReference>
<dbReference type="InterPro" id="IPR000713">
    <property type="entry name" value="Mur_ligase_N"/>
</dbReference>
<dbReference type="InterPro" id="IPR050061">
    <property type="entry name" value="MurCDEF_pg_biosynth"/>
</dbReference>
<dbReference type="InterPro" id="IPR005758">
    <property type="entry name" value="UDP-N-AcMur_Ala_ligase_MurC"/>
</dbReference>
<dbReference type="NCBIfam" id="TIGR01082">
    <property type="entry name" value="murC"/>
    <property type="match status" value="1"/>
</dbReference>
<dbReference type="PANTHER" id="PTHR43445:SF3">
    <property type="entry name" value="UDP-N-ACETYLMURAMATE--L-ALANINE LIGASE"/>
    <property type="match status" value="1"/>
</dbReference>
<dbReference type="PANTHER" id="PTHR43445">
    <property type="entry name" value="UDP-N-ACETYLMURAMATE--L-ALANINE LIGASE-RELATED"/>
    <property type="match status" value="1"/>
</dbReference>
<dbReference type="Pfam" id="PF01225">
    <property type="entry name" value="Mur_ligase"/>
    <property type="match status" value="1"/>
</dbReference>
<dbReference type="Pfam" id="PF02875">
    <property type="entry name" value="Mur_ligase_C"/>
    <property type="match status" value="1"/>
</dbReference>
<dbReference type="Pfam" id="PF08245">
    <property type="entry name" value="Mur_ligase_M"/>
    <property type="match status" value="1"/>
</dbReference>
<dbReference type="SUPFAM" id="SSF51984">
    <property type="entry name" value="MurCD N-terminal domain"/>
    <property type="match status" value="1"/>
</dbReference>
<dbReference type="SUPFAM" id="SSF53623">
    <property type="entry name" value="MurD-like peptide ligases, catalytic domain"/>
    <property type="match status" value="1"/>
</dbReference>
<dbReference type="SUPFAM" id="SSF53244">
    <property type="entry name" value="MurD-like peptide ligases, peptide-binding domain"/>
    <property type="match status" value="1"/>
</dbReference>
<proteinExistence type="inferred from homology"/>
<gene>
    <name evidence="1" type="primary">murC</name>
    <name type="ordered locus">SE_1413</name>
</gene>
<protein>
    <recommendedName>
        <fullName evidence="1">UDP-N-acetylmuramate--L-alanine ligase</fullName>
        <ecNumber evidence="1">6.3.2.8</ecNumber>
    </recommendedName>
    <alternativeName>
        <fullName evidence="1">UDP-N-acetylmuramoyl-L-alanine synthetase</fullName>
    </alternativeName>
</protein>
<keyword id="KW-0067">ATP-binding</keyword>
<keyword id="KW-0131">Cell cycle</keyword>
<keyword id="KW-0132">Cell division</keyword>
<keyword id="KW-0133">Cell shape</keyword>
<keyword id="KW-0961">Cell wall biogenesis/degradation</keyword>
<keyword id="KW-0963">Cytoplasm</keyword>
<keyword id="KW-0436">Ligase</keyword>
<keyword id="KW-0547">Nucleotide-binding</keyword>
<keyword id="KW-0573">Peptidoglycan synthesis</keyword>
<evidence type="ECO:0000255" key="1">
    <source>
        <dbReference type="HAMAP-Rule" id="MF_00046"/>
    </source>
</evidence>
<reference key="1">
    <citation type="journal article" date="2003" name="Mol. Microbiol.">
        <title>Genome-based analysis of virulence genes in a non-biofilm-forming Staphylococcus epidermidis strain (ATCC 12228).</title>
        <authorList>
            <person name="Zhang Y.-Q."/>
            <person name="Ren S.-X."/>
            <person name="Li H.-L."/>
            <person name="Wang Y.-X."/>
            <person name="Fu G."/>
            <person name="Yang J."/>
            <person name="Qin Z.-Q."/>
            <person name="Miao Y.-G."/>
            <person name="Wang W.-Y."/>
            <person name="Chen R.-S."/>
            <person name="Shen Y."/>
            <person name="Chen Z."/>
            <person name="Yuan Z.-H."/>
            <person name="Zhao G.-P."/>
            <person name="Qu D."/>
            <person name="Danchin A."/>
            <person name="Wen Y.-M."/>
        </authorList>
    </citation>
    <scope>NUCLEOTIDE SEQUENCE [LARGE SCALE GENOMIC DNA]</scope>
    <source>
        <strain>ATCC 12228 / FDA PCI 1200</strain>
    </source>
</reference>